<protein>
    <recommendedName>
        <fullName>Uncharacterized protein SYNPCC7002_A0852</fullName>
    </recommendedName>
</protein>
<name>Y852_PICP2</name>
<keyword id="KW-1185">Reference proteome</keyword>
<organism>
    <name type="scientific">Picosynechococcus sp. (strain ATCC 27264 / PCC 7002 / PR-6)</name>
    <name type="common">Agmenellum quadruplicatum</name>
    <dbReference type="NCBI Taxonomy" id="32049"/>
    <lineage>
        <taxon>Bacteria</taxon>
        <taxon>Bacillati</taxon>
        <taxon>Cyanobacteriota</taxon>
        <taxon>Cyanophyceae</taxon>
        <taxon>Oscillatoriophycideae</taxon>
        <taxon>Chroococcales</taxon>
        <taxon>Geminocystaceae</taxon>
        <taxon>Picosynechococcus</taxon>
    </lineage>
</organism>
<proteinExistence type="predicted"/>
<dbReference type="EMBL" id="M86234">
    <property type="protein sequence ID" value="AAA27324.1"/>
    <property type="status" value="ALT_FRAME"/>
    <property type="molecule type" value="Genomic_DNA"/>
</dbReference>
<dbReference type="EMBL" id="CP000951">
    <property type="protein sequence ID" value="ACA98856.1"/>
    <property type="molecule type" value="Genomic_DNA"/>
</dbReference>
<dbReference type="RefSeq" id="WP_012306480.1">
    <property type="nucleotide sequence ID" value="NZ_JAHHPU010000001.1"/>
</dbReference>
<dbReference type="SMR" id="P32039"/>
<dbReference type="STRING" id="32049.SYNPCC7002_A0852"/>
<dbReference type="KEGG" id="syp:SYNPCC7002_A0852"/>
<dbReference type="eggNOG" id="COG2203">
    <property type="taxonomic scope" value="Bacteria"/>
</dbReference>
<dbReference type="HOGENOM" id="CLU_110622_0_0_3"/>
<dbReference type="Proteomes" id="UP000001688">
    <property type="component" value="Chromosome"/>
</dbReference>
<dbReference type="Gene3D" id="3.30.450.40">
    <property type="match status" value="1"/>
</dbReference>
<dbReference type="InterPro" id="IPR003018">
    <property type="entry name" value="GAF"/>
</dbReference>
<dbReference type="InterPro" id="IPR029016">
    <property type="entry name" value="GAF-like_dom_sf"/>
</dbReference>
<dbReference type="InterPro" id="IPR016132">
    <property type="entry name" value="Phyto_chromo_attachment"/>
</dbReference>
<dbReference type="Pfam" id="PF01590">
    <property type="entry name" value="GAF"/>
    <property type="match status" value="1"/>
</dbReference>
<dbReference type="SMART" id="SM00065">
    <property type="entry name" value="GAF"/>
    <property type="match status" value="1"/>
</dbReference>
<dbReference type="SUPFAM" id="SSF55781">
    <property type="entry name" value="GAF domain-like"/>
    <property type="match status" value="1"/>
</dbReference>
<dbReference type="PROSITE" id="PS50046">
    <property type="entry name" value="PHYTOCHROME_2"/>
    <property type="match status" value="1"/>
</dbReference>
<gene>
    <name type="ordered locus">SYNPCC7002_A0852</name>
</gene>
<accession>P32039</accession>
<accession>B1XII5</accession>
<comment type="sequence caution" evidence="1">
    <conflict type="frameshift">
        <sequence resource="EMBL-CDS" id="AAA27324"/>
    </conflict>
</comment>
<feature type="chain" id="PRO_0000172003" description="Uncharacterized protein SYNPCC7002_A0852">
    <location>
        <begin position="1"/>
        <end position="162"/>
    </location>
</feature>
<feature type="sequence conflict" description="In Ref. 1; AAA27324." evidence="1" ref="1">
    <original>QQATDQTR</original>
    <variation>HRPLIKHS</variation>
    <location>
        <begin position="24"/>
        <end position="31"/>
    </location>
</feature>
<sequence>MFDRSLNRVNERLNRTLTRNQLLQQATDQTRWQLRVSRVVIYYFYREWKGQVIIESLSQSEFSILGSTGADDCFNGDYAQRYLQGRILQITDIEASDFDPCHLDFLRSIRVRADLVAPIIVDQRLWGLLAAHHHEVRTWLAEEVEFVRQQAQTLAGDLQLMD</sequence>
<evidence type="ECO:0000305" key="1"/>
<reference key="1">
    <citation type="journal article" date="1992" name="Biochemistry">
        <title>Molecular characterization of ferredoxin-NADP+ oxidoreductase in cyanobacteria: cloning and sequence of the petH gene of Synechococcus sp. PCC 7002 and studies on the gene product.</title>
        <authorList>
            <person name="Schluchter W.M."/>
            <person name="Bryant D.A."/>
        </authorList>
    </citation>
    <scope>NUCLEOTIDE SEQUENCE [GENOMIC DNA]</scope>
</reference>
<reference key="2">
    <citation type="submission" date="2008-02" db="EMBL/GenBank/DDBJ databases">
        <title>Complete sequence of Synechococcus sp. PCC 7002.</title>
        <authorList>
            <person name="Li T."/>
            <person name="Zhao J."/>
            <person name="Zhao C."/>
            <person name="Liu Z."/>
            <person name="Zhao F."/>
            <person name="Marquardt J."/>
            <person name="Nomura C.T."/>
            <person name="Persson S."/>
            <person name="Detter J.C."/>
            <person name="Richardson P.M."/>
            <person name="Lanz C."/>
            <person name="Schuster S.C."/>
            <person name="Wang J."/>
            <person name="Li S."/>
            <person name="Huang X."/>
            <person name="Cai T."/>
            <person name="Yu Z."/>
            <person name="Luo J."/>
            <person name="Zhao J."/>
            <person name="Bryant D.A."/>
        </authorList>
    </citation>
    <scope>NUCLEOTIDE SEQUENCE [LARGE SCALE GENOMIC DNA]</scope>
    <source>
        <strain>ATCC 27264 / PCC 7002 / PR-6</strain>
    </source>
</reference>